<comment type="function">
    <text evidence="1">Exhibits GTPase activity. Binds RNA but is probably not involved in ribosome assembly in mycobacteria.</text>
</comment>
<comment type="subunit">
    <text evidence="1">Monomer.</text>
</comment>
<comment type="subcellular location">
    <subcellularLocation>
        <location evidence="1">Cell envelope</location>
    </subcellularLocation>
    <subcellularLocation>
        <location evidence="1">Secreted</location>
        <location evidence="1">Cell wall</location>
    </subcellularLocation>
</comment>
<comment type="similarity">
    <text evidence="1">Belongs to the TRAFAC class TrmE-Era-EngA-EngB-Septin-like GTPase superfamily. Era GTPase family.</text>
</comment>
<evidence type="ECO:0000255" key="1">
    <source>
        <dbReference type="HAMAP-Rule" id="MF_00367"/>
    </source>
</evidence>
<evidence type="ECO:0000255" key="2">
    <source>
        <dbReference type="PROSITE-ProRule" id="PRU01050"/>
    </source>
</evidence>
<sequence length="299" mass="32548">MTEFRSGFVCLVGRPNTGKSTLTNALVGTKVAITSMRPQTTRHTIRGIVHREDFQIILVDTPGLHRPRTLLGKRLNDLVRDTYAEVDVIGLCIPADEAIGPGDRWIVEQIRATAPKTTLVAIVTKIDKVPKDRVAAQLVAVSELVGDSAEIVPVSAVTGAQVDIVIDVLAAALPPGPAYYPDGELTDEPEEVLMAELIREAALEGVRDELPHSLAVVIDEVNPREDRDDLIDVHALLYVERDSQKGIIIGKGGARLREVGTAARAQIEKLLGTKVYLDLRVKVAKNWQSDPKQLGRLGF</sequence>
<organism>
    <name type="scientific">Mycolicibacterium paratuberculosis (strain ATCC BAA-968 / K-10)</name>
    <name type="common">Mycobacterium paratuberculosis</name>
    <dbReference type="NCBI Taxonomy" id="262316"/>
    <lineage>
        <taxon>Bacteria</taxon>
        <taxon>Bacillati</taxon>
        <taxon>Actinomycetota</taxon>
        <taxon>Actinomycetes</taxon>
        <taxon>Mycobacteriales</taxon>
        <taxon>Mycobacteriaceae</taxon>
        <taxon>Mycobacterium</taxon>
        <taxon>Mycobacterium avium complex (MAC)</taxon>
    </lineage>
</organism>
<accession>Q73Y13</accession>
<name>ERA_MYCPA</name>
<feature type="chain" id="PRO_1000079711" description="GTPase Era">
    <location>
        <begin position="1"/>
        <end position="299"/>
    </location>
</feature>
<feature type="domain" description="Era-type G" evidence="2">
    <location>
        <begin position="5"/>
        <end position="175"/>
    </location>
</feature>
<feature type="domain" description="KH type-2" evidence="1">
    <location>
        <begin position="206"/>
        <end position="285"/>
    </location>
</feature>
<feature type="region of interest" description="G1" evidence="2">
    <location>
        <begin position="13"/>
        <end position="20"/>
    </location>
</feature>
<feature type="region of interest" description="G2" evidence="2">
    <location>
        <begin position="39"/>
        <end position="43"/>
    </location>
</feature>
<feature type="region of interest" description="G3" evidence="2">
    <location>
        <begin position="60"/>
        <end position="63"/>
    </location>
</feature>
<feature type="region of interest" description="G4" evidence="2">
    <location>
        <begin position="124"/>
        <end position="127"/>
    </location>
</feature>
<feature type="region of interest" description="G5" evidence="2">
    <location>
        <begin position="154"/>
        <end position="156"/>
    </location>
</feature>
<feature type="binding site" evidence="1">
    <location>
        <begin position="13"/>
        <end position="20"/>
    </location>
    <ligand>
        <name>GTP</name>
        <dbReference type="ChEBI" id="CHEBI:37565"/>
    </ligand>
</feature>
<feature type="binding site" evidence="1">
    <location>
        <begin position="60"/>
        <end position="64"/>
    </location>
    <ligand>
        <name>GTP</name>
        <dbReference type="ChEBI" id="CHEBI:37565"/>
    </ligand>
</feature>
<feature type="binding site" evidence="1">
    <location>
        <begin position="124"/>
        <end position="127"/>
    </location>
    <ligand>
        <name>GTP</name>
        <dbReference type="ChEBI" id="CHEBI:37565"/>
    </ligand>
</feature>
<gene>
    <name evidence="1" type="primary">era</name>
    <name type="ordered locus">MAP_2145c</name>
</gene>
<keyword id="KW-0134">Cell wall</keyword>
<keyword id="KW-0342">GTP-binding</keyword>
<keyword id="KW-0547">Nucleotide-binding</keyword>
<keyword id="KW-1185">Reference proteome</keyword>
<keyword id="KW-0694">RNA-binding</keyword>
<keyword id="KW-0964">Secreted</keyword>
<dbReference type="EMBL" id="AE016958">
    <property type="protein sequence ID" value="AAS04462.1"/>
    <property type="molecule type" value="Genomic_DNA"/>
</dbReference>
<dbReference type="RefSeq" id="WP_003878323.1">
    <property type="nucleotide sequence ID" value="NZ_CP106873.1"/>
</dbReference>
<dbReference type="SMR" id="Q73Y13"/>
<dbReference type="STRING" id="262316.MAP_2145c"/>
<dbReference type="GeneID" id="75269629"/>
<dbReference type="KEGG" id="mpa:MAP_2145c"/>
<dbReference type="eggNOG" id="COG1159">
    <property type="taxonomic scope" value="Bacteria"/>
</dbReference>
<dbReference type="HOGENOM" id="CLU_038009_0_2_11"/>
<dbReference type="Proteomes" id="UP000000580">
    <property type="component" value="Chromosome"/>
</dbReference>
<dbReference type="GO" id="GO:0030313">
    <property type="term" value="C:cell envelope"/>
    <property type="evidence" value="ECO:0007669"/>
    <property type="project" value="UniProtKB-SubCell"/>
</dbReference>
<dbReference type="GO" id="GO:0005829">
    <property type="term" value="C:cytosol"/>
    <property type="evidence" value="ECO:0007669"/>
    <property type="project" value="TreeGrafter"/>
</dbReference>
<dbReference type="GO" id="GO:0005576">
    <property type="term" value="C:extracellular region"/>
    <property type="evidence" value="ECO:0007669"/>
    <property type="project" value="UniProtKB-KW"/>
</dbReference>
<dbReference type="GO" id="GO:0005525">
    <property type="term" value="F:GTP binding"/>
    <property type="evidence" value="ECO:0007669"/>
    <property type="project" value="UniProtKB-UniRule"/>
</dbReference>
<dbReference type="GO" id="GO:0003924">
    <property type="term" value="F:GTPase activity"/>
    <property type="evidence" value="ECO:0007669"/>
    <property type="project" value="UniProtKB-UniRule"/>
</dbReference>
<dbReference type="GO" id="GO:0043024">
    <property type="term" value="F:ribosomal small subunit binding"/>
    <property type="evidence" value="ECO:0007669"/>
    <property type="project" value="TreeGrafter"/>
</dbReference>
<dbReference type="GO" id="GO:0019843">
    <property type="term" value="F:rRNA binding"/>
    <property type="evidence" value="ECO:0007669"/>
    <property type="project" value="TreeGrafter"/>
</dbReference>
<dbReference type="GO" id="GO:0000028">
    <property type="term" value="P:ribosomal small subunit assembly"/>
    <property type="evidence" value="ECO:0007669"/>
    <property type="project" value="TreeGrafter"/>
</dbReference>
<dbReference type="CDD" id="cd04163">
    <property type="entry name" value="Era"/>
    <property type="match status" value="1"/>
</dbReference>
<dbReference type="CDD" id="cd22534">
    <property type="entry name" value="KH-II_Era"/>
    <property type="match status" value="1"/>
</dbReference>
<dbReference type="FunFam" id="3.30.300.20:FF:000003">
    <property type="entry name" value="GTPase Era"/>
    <property type="match status" value="1"/>
</dbReference>
<dbReference type="FunFam" id="3.40.50.300:FF:000094">
    <property type="entry name" value="GTPase Era"/>
    <property type="match status" value="1"/>
</dbReference>
<dbReference type="Gene3D" id="3.30.300.20">
    <property type="match status" value="1"/>
</dbReference>
<dbReference type="Gene3D" id="3.40.50.300">
    <property type="entry name" value="P-loop containing nucleotide triphosphate hydrolases"/>
    <property type="match status" value="1"/>
</dbReference>
<dbReference type="HAMAP" id="MF_00367">
    <property type="entry name" value="GTPase_Era"/>
    <property type="match status" value="1"/>
</dbReference>
<dbReference type="InterPro" id="IPR030388">
    <property type="entry name" value="G_ERA_dom"/>
</dbReference>
<dbReference type="InterPro" id="IPR006073">
    <property type="entry name" value="GTP-bd"/>
</dbReference>
<dbReference type="InterPro" id="IPR005662">
    <property type="entry name" value="GTPase_Era-like"/>
</dbReference>
<dbReference type="InterPro" id="IPR015946">
    <property type="entry name" value="KH_dom-like_a/b"/>
</dbReference>
<dbReference type="InterPro" id="IPR004044">
    <property type="entry name" value="KH_dom_type_2"/>
</dbReference>
<dbReference type="InterPro" id="IPR009019">
    <property type="entry name" value="KH_sf_prok-type"/>
</dbReference>
<dbReference type="InterPro" id="IPR027417">
    <property type="entry name" value="P-loop_NTPase"/>
</dbReference>
<dbReference type="InterPro" id="IPR005225">
    <property type="entry name" value="Small_GTP-bd"/>
</dbReference>
<dbReference type="NCBIfam" id="TIGR00436">
    <property type="entry name" value="era"/>
    <property type="match status" value="1"/>
</dbReference>
<dbReference type="NCBIfam" id="NF000908">
    <property type="entry name" value="PRK00089.1"/>
    <property type="match status" value="1"/>
</dbReference>
<dbReference type="NCBIfam" id="TIGR00231">
    <property type="entry name" value="small_GTP"/>
    <property type="match status" value="1"/>
</dbReference>
<dbReference type="PANTHER" id="PTHR42698">
    <property type="entry name" value="GTPASE ERA"/>
    <property type="match status" value="1"/>
</dbReference>
<dbReference type="PANTHER" id="PTHR42698:SF1">
    <property type="entry name" value="GTPASE ERA, MITOCHONDRIAL"/>
    <property type="match status" value="1"/>
</dbReference>
<dbReference type="Pfam" id="PF07650">
    <property type="entry name" value="KH_2"/>
    <property type="match status" value="1"/>
</dbReference>
<dbReference type="Pfam" id="PF01926">
    <property type="entry name" value="MMR_HSR1"/>
    <property type="match status" value="1"/>
</dbReference>
<dbReference type="PRINTS" id="PR00326">
    <property type="entry name" value="GTP1OBG"/>
</dbReference>
<dbReference type="SUPFAM" id="SSF52540">
    <property type="entry name" value="P-loop containing nucleoside triphosphate hydrolases"/>
    <property type="match status" value="1"/>
</dbReference>
<dbReference type="SUPFAM" id="SSF54814">
    <property type="entry name" value="Prokaryotic type KH domain (KH-domain type II)"/>
    <property type="match status" value="1"/>
</dbReference>
<dbReference type="PROSITE" id="PS51713">
    <property type="entry name" value="G_ERA"/>
    <property type="match status" value="1"/>
</dbReference>
<dbReference type="PROSITE" id="PS50823">
    <property type="entry name" value="KH_TYPE_2"/>
    <property type="match status" value="1"/>
</dbReference>
<protein>
    <recommendedName>
        <fullName evidence="1">GTPase Era</fullName>
    </recommendedName>
</protein>
<reference key="1">
    <citation type="journal article" date="2005" name="Proc. Natl. Acad. Sci. U.S.A.">
        <title>The complete genome sequence of Mycobacterium avium subspecies paratuberculosis.</title>
        <authorList>
            <person name="Li L."/>
            <person name="Bannantine J.P."/>
            <person name="Zhang Q."/>
            <person name="Amonsin A."/>
            <person name="May B.J."/>
            <person name="Alt D."/>
            <person name="Banerji N."/>
            <person name="Kanjilal S."/>
            <person name="Kapur V."/>
        </authorList>
    </citation>
    <scope>NUCLEOTIDE SEQUENCE [LARGE SCALE GENOMIC DNA]</scope>
    <source>
        <strain>ATCC BAA-968 / K-10</strain>
    </source>
</reference>
<proteinExistence type="inferred from homology"/>